<gene>
    <name type="primary">MYO1</name>
    <name type="ordered locus">CNBI2300</name>
</gene>
<comment type="function">
    <text evidence="1">Type-I myosin implicated in the organization of the actin cytoskeleton. Required for proper actin cytoskeleton polarization. At the cell cortex, assembles in patch-like structures together with proteins from the actin-polymerizing machinery and promotes actin assembly. Functions as actin nucleation-promoting factor (NPF) for the Arp2/3 complex (By similarity).</text>
</comment>
<comment type="subcellular location">
    <subcellularLocation>
        <location evidence="1">Cytoplasm</location>
        <location evidence="1">Cytoskeleton</location>
        <location evidence="1">Actin patch</location>
    </subcellularLocation>
</comment>
<comment type="domain">
    <text evidence="1">The myosin motor domain displays actin-stimulated ATPase activity and generates a mechanochemical force.</text>
</comment>
<comment type="domain">
    <text evidence="1">The tail domain participates in molecular interactions that specify the role of the motor domain (By similarity). It is composed of several tail homology (TH) domains, namely a putative phospholipid-binding myosin tail domain (also named TH1), an Ala- and Pro-rich domain (TH2), followed by an SH3 domain and a C-terminal acidic domain (TH3).</text>
</comment>
<comment type="PTM">
    <text evidence="1">Phosphorylation of the TEDS site (Ser-363) is required for the polarization of the actin cytoskeleton. Phosphorylation probably activates the myosin-I ATPase activity (By similarity).</text>
</comment>
<comment type="similarity">
    <text evidence="7">Belongs to the TRAFAC class myosin-kinesin ATPase superfamily. Myosin family.</text>
</comment>
<dbReference type="EMBL" id="AAEY01000044">
    <property type="protein sequence ID" value="EAL18969.1"/>
    <property type="molecule type" value="Genomic_DNA"/>
</dbReference>
<dbReference type="RefSeq" id="XP_773616.1">
    <property type="nucleotide sequence ID" value="XM_768523.1"/>
</dbReference>
<dbReference type="SMR" id="P0CP01"/>
<dbReference type="EnsemblFungi" id="AAW46486">
    <property type="protein sequence ID" value="AAW46486"/>
    <property type="gene ID" value="CNL04540"/>
</dbReference>
<dbReference type="GeneID" id="4938190"/>
<dbReference type="KEGG" id="cnb:CNBI2300"/>
<dbReference type="VEuPathDB" id="FungiDB:CNBI2300"/>
<dbReference type="HOGENOM" id="CLU_000192_7_6_1"/>
<dbReference type="OrthoDB" id="6492at5206"/>
<dbReference type="GO" id="GO:0030479">
    <property type="term" value="C:actin cortical patch"/>
    <property type="evidence" value="ECO:0007669"/>
    <property type="project" value="UniProtKB-SubCell"/>
</dbReference>
<dbReference type="GO" id="GO:0051285">
    <property type="term" value="C:cell cortex of cell tip"/>
    <property type="evidence" value="ECO:0007669"/>
    <property type="project" value="EnsemblFungi"/>
</dbReference>
<dbReference type="GO" id="GO:0043332">
    <property type="term" value="C:mating projection tip"/>
    <property type="evidence" value="ECO:0007669"/>
    <property type="project" value="EnsemblFungi"/>
</dbReference>
<dbReference type="GO" id="GO:0031097">
    <property type="term" value="C:medial cortex"/>
    <property type="evidence" value="ECO:0007669"/>
    <property type="project" value="EnsemblFungi"/>
</dbReference>
<dbReference type="GO" id="GO:0045160">
    <property type="term" value="C:myosin I complex"/>
    <property type="evidence" value="ECO:0007669"/>
    <property type="project" value="EnsemblFungi"/>
</dbReference>
<dbReference type="GO" id="GO:0044853">
    <property type="term" value="C:plasma membrane raft"/>
    <property type="evidence" value="ECO:0007669"/>
    <property type="project" value="EnsemblFungi"/>
</dbReference>
<dbReference type="GO" id="GO:0051015">
    <property type="term" value="F:actin filament binding"/>
    <property type="evidence" value="ECO:0007669"/>
    <property type="project" value="EnsemblFungi"/>
</dbReference>
<dbReference type="GO" id="GO:0071933">
    <property type="term" value="F:Arp2/3 complex binding"/>
    <property type="evidence" value="ECO:0007669"/>
    <property type="project" value="EnsemblFungi"/>
</dbReference>
<dbReference type="GO" id="GO:0005524">
    <property type="term" value="F:ATP binding"/>
    <property type="evidence" value="ECO:0007669"/>
    <property type="project" value="UniProtKB-KW"/>
</dbReference>
<dbReference type="GO" id="GO:0016787">
    <property type="term" value="F:hydrolase activity"/>
    <property type="evidence" value="ECO:0007669"/>
    <property type="project" value="UniProtKB-KW"/>
</dbReference>
<dbReference type="GO" id="GO:0000146">
    <property type="term" value="F:microfilament motor activity"/>
    <property type="evidence" value="ECO:0007669"/>
    <property type="project" value="EnsemblFungi"/>
</dbReference>
<dbReference type="GO" id="GO:0000147">
    <property type="term" value="P:actin cortical patch assembly"/>
    <property type="evidence" value="ECO:0007669"/>
    <property type="project" value="EnsemblFungi"/>
</dbReference>
<dbReference type="GO" id="GO:0051666">
    <property type="term" value="P:actin cortical patch localization"/>
    <property type="evidence" value="ECO:0007669"/>
    <property type="project" value="TreeGrafter"/>
</dbReference>
<dbReference type="GO" id="GO:0007015">
    <property type="term" value="P:actin filament organization"/>
    <property type="evidence" value="ECO:0007669"/>
    <property type="project" value="TreeGrafter"/>
</dbReference>
<dbReference type="GO" id="GO:0006897">
    <property type="term" value="P:endocytosis"/>
    <property type="evidence" value="ECO:0007669"/>
    <property type="project" value="EnsemblFungi"/>
</dbReference>
<dbReference type="GO" id="GO:0000281">
    <property type="term" value="P:mitotic cytokinesis"/>
    <property type="evidence" value="ECO:0007669"/>
    <property type="project" value="EnsemblFungi"/>
</dbReference>
<dbReference type="CDD" id="cd01378">
    <property type="entry name" value="MYSc_Myo1"/>
    <property type="match status" value="1"/>
</dbReference>
<dbReference type="CDD" id="cd11856">
    <property type="entry name" value="SH3_p47phox_like"/>
    <property type="match status" value="1"/>
</dbReference>
<dbReference type="FunFam" id="1.10.10.820:FF:000001">
    <property type="entry name" value="Myosin heavy chain"/>
    <property type="match status" value="1"/>
</dbReference>
<dbReference type="FunFam" id="1.20.120.720:FF:000015">
    <property type="entry name" value="Myosin I"/>
    <property type="match status" value="1"/>
</dbReference>
<dbReference type="FunFam" id="1.20.58.530:FF:000007">
    <property type="entry name" value="Myosin IE"/>
    <property type="match status" value="1"/>
</dbReference>
<dbReference type="Gene3D" id="1.10.10.820">
    <property type="match status" value="1"/>
</dbReference>
<dbReference type="Gene3D" id="1.20.5.4820">
    <property type="match status" value="1"/>
</dbReference>
<dbReference type="Gene3D" id="1.20.58.530">
    <property type="match status" value="1"/>
</dbReference>
<dbReference type="Gene3D" id="3.40.850.10">
    <property type="entry name" value="Kinesin motor domain"/>
    <property type="match status" value="1"/>
</dbReference>
<dbReference type="Gene3D" id="1.20.120.720">
    <property type="entry name" value="Myosin VI head, motor domain, U50 subdomain"/>
    <property type="match status" value="1"/>
</dbReference>
<dbReference type="Gene3D" id="2.30.30.40">
    <property type="entry name" value="SH3 Domains"/>
    <property type="match status" value="1"/>
</dbReference>
<dbReference type="InterPro" id="IPR036961">
    <property type="entry name" value="Kinesin_motor_dom_sf"/>
</dbReference>
<dbReference type="InterPro" id="IPR001609">
    <property type="entry name" value="Myosin_head_motor_dom-like"/>
</dbReference>
<dbReference type="InterPro" id="IPR010926">
    <property type="entry name" value="Myosin_TH1"/>
</dbReference>
<dbReference type="InterPro" id="IPR036072">
    <property type="entry name" value="MYSc_Myo1"/>
</dbReference>
<dbReference type="InterPro" id="IPR027417">
    <property type="entry name" value="P-loop_NTPase"/>
</dbReference>
<dbReference type="InterPro" id="IPR036028">
    <property type="entry name" value="SH3-like_dom_sf"/>
</dbReference>
<dbReference type="InterPro" id="IPR001452">
    <property type="entry name" value="SH3_domain"/>
</dbReference>
<dbReference type="PANTHER" id="PTHR13140">
    <property type="entry name" value="MYOSIN"/>
    <property type="match status" value="1"/>
</dbReference>
<dbReference type="PANTHER" id="PTHR13140:SF837">
    <property type="entry name" value="MYOSIN-3-RELATED"/>
    <property type="match status" value="1"/>
</dbReference>
<dbReference type="Pfam" id="PF00063">
    <property type="entry name" value="Myosin_head"/>
    <property type="match status" value="1"/>
</dbReference>
<dbReference type="Pfam" id="PF06017">
    <property type="entry name" value="Myosin_TH1"/>
    <property type="match status" value="1"/>
</dbReference>
<dbReference type="Pfam" id="PF07653">
    <property type="entry name" value="SH3_2"/>
    <property type="match status" value="1"/>
</dbReference>
<dbReference type="PRINTS" id="PR00193">
    <property type="entry name" value="MYOSINHEAVY"/>
</dbReference>
<dbReference type="SMART" id="SM00242">
    <property type="entry name" value="MYSc"/>
    <property type="match status" value="1"/>
</dbReference>
<dbReference type="SMART" id="SM00326">
    <property type="entry name" value="SH3"/>
    <property type="match status" value="1"/>
</dbReference>
<dbReference type="SUPFAM" id="SSF52540">
    <property type="entry name" value="P-loop containing nucleoside triphosphate hydrolases"/>
    <property type="match status" value="1"/>
</dbReference>
<dbReference type="SUPFAM" id="SSF50044">
    <property type="entry name" value="SH3-domain"/>
    <property type="match status" value="1"/>
</dbReference>
<dbReference type="PROSITE" id="PS51456">
    <property type="entry name" value="MYOSIN_MOTOR"/>
    <property type="match status" value="1"/>
</dbReference>
<dbReference type="PROSITE" id="PS50002">
    <property type="entry name" value="SH3"/>
    <property type="match status" value="1"/>
</dbReference>
<dbReference type="PROSITE" id="PS51757">
    <property type="entry name" value="TH1"/>
    <property type="match status" value="1"/>
</dbReference>
<protein>
    <recommendedName>
        <fullName>Myosin-1</fullName>
    </recommendedName>
    <alternativeName>
        <fullName>Class I unconventional myosin</fullName>
    </alternativeName>
    <alternativeName>
        <fullName>Type I myosin</fullName>
    </alternativeName>
</protein>
<organism>
    <name type="scientific">Cryptococcus neoformans var. neoformans serotype D (strain B-3501A)</name>
    <name type="common">Filobasidiella neoformans</name>
    <dbReference type="NCBI Taxonomy" id="283643"/>
    <lineage>
        <taxon>Eukaryota</taxon>
        <taxon>Fungi</taxon>
        <taxon>Dikarya</taxon>
        <taxon>Basidiomycota</taxon>
        <taxon>Agaricomycotina</taxon>
        <taxon>Tremellomycetes</taxon>
        <taxon>Tremellales</taxon>
        <taxon>Cryptococcaceae</taxon>
        <taxon>Cryptococcus</taxon>
        <taxon>Cryptococcus neoformans species complex</taxon>
    </lineage>
</organism>
<name>MYO1_CRYNB</name>
<sequence>MAPSKKAGKKGAVGGFLSGASKPQKVQKADWSEGFTKKKAAGVPDMTLLSTITNEAINDNLKVRFQNQEIYTYIAHVLISVNPFRDLGIYTNDVLNSYRGKNRLEMSPHVFAIAESAYYRMTTEKENQCVIISGESGAGKTEAAKRIMQYIAAVSGGAEGGGIEGIKEMVLATNPLLESFGCAKTLRNDNSSRHGKYLEIMFNGMGQPVGAQITNYLLEKNRVVGQIDDERDFHIFYQFTKGASAKMKEAFGLQGPEAYAYISRSGCLDVKSINDVSDFQETLRAMQVIGLTSDEQDSIFRILATILWLGNIDFVEGDDGNAAISDSGVADFAAYLLEVDSAQLQKVLLMRIMETQRGGRRGSVYEVPQNVAQASSGRDALAKALYNNLFEWIVSRVNISMKPQTPSQYVIGVLDIYGFEIFQDNSFEQLSINYVNEKLQQIFIELTLKAEQEEYVREQIKWTPIKFFDNSVVCSLIEDRRPAGIFATLNDATATAHADPSAADNSFIQRSSMLASNPNFEARGNKFLIKHYAGDVLYTVAGMTDKNKDTLIKDILDLIEGSKDPFLHTLFPDKVDHTSKKRPPTAGDKIKLSANLLVENLMNCQPHYIRTIKPNQHRSPTEYDDKAILHQIKYLGLQENIRVRRAGFAYRAEFSKMIQRFYLLSPATSYAGDYIWTGDDRSGCERILTDAKIKKEEWQMGVTKAFIKNPETLFYLEGERDRYWHTMASRIQRAWRAYVRRKHEAATKIQRFWRNQREALVYERKRDYGHQVLAGKKERRRFSLLGMRKFMGDYLDIAGGSAQGEMLRNAATISPAEQVHFSSRAELLVSKLGRSSKLSPRFLIITDKAVYFVVSQARDGRVSTSLERKIPLVTIKAISMTNLRDDFVALNVNACEEGDPIFTCVFKTEMITVILTLTGGNMSVNIGPTIDYAKKKDKRAVIKTQKNEAVRGDATYKSHTIQVGSGEPPNSLSNPMPPRKPKVKKAAKTASSSRPVNSGRPAAVALPGATKPAAPPALSSMPSHTPVVTKPTAIPTAAIGAARAPPSIPGRAAAPPPPPPPPPPAGPPKEFYKALYNFTGQEGEMNLVKGEEVEVKEKDDNGWWMVVKNGQEGWAPSNYLKKVEQAPPPPPPPPPPSRPVAARPPAASSAPTAPAVTNGSAVPSWKAKNAASATPSADSTPPTSRPASSASKVPPAIKAKPSIPAKPAIPAKPQVGAKPAPAIGGKPPVPTAPKVQPKAASKLGQVAQPAKAPGQLDLAAAFAKRAARAQQEED</sequence>
<proteinExistence type="inferred from homology"/>
<reference key="1">
    <citation type="journal article" date="2005" name="Science">
        <title>The genome of the basidiomycetous yeast and human pathogen Cryptococcus neoformans.</title>
        <authorList>
            <person name="Loftus B.J."/>
            <person name="Fung E."/>
            <person name="Roncaglia P."/>
            <person name="Rowley D."/>
            <person name="Amedeo P."/>
            <person name="Bruno D."/>
            <person name="Vamathevan J."/>
            <person name="Miranda M."/>
            <person name="Anderson I.J."/>
            <person name="Fraser J.A."/>
            <person name="Allen J.E."/>
            <person name="Bosdet I.E."/>
            <person name="Brent M.R."/>
            <person name="Chiu R."/>
            <person name="Doering T.L."/>
            <person name="Donlin M.J."/>
            <person name="D'Souza C.A."/>
            <person name="Fox D.S."/>
            <person name="Grinberg V."/>
            <person name="Fu J."/>
            <person name="Fukushima M."/>
            <person name="Haas B.J."/>
            <person name="Huang J.C."/>
            <person name="Janbon G."/>
            <person name="Jones S.J.M."/>
            <person name="Koo H.L."/>
            <person name="Krzywinski M.I."/>
            <person name="Kwon-Chung K.J."/>
            <person name="Lengeler K.B."/>
            <person name="Maiti R."/>
            <person name="Marra M.A."/>
            <person name="Marra R.E."/>
            <person name="Mathewson C.A."/>
            <person name="Mitchell T.G."/>
            <person name="Pertea M."/>
            <person name="Riggs F.R."/>
            <person name="Salzberg S.L."/>
            <person name="Schein J.E."/>
            <person name="Shvartsbeyn A."/>
            <person name="Shin H."/>
            <person name="Shumway M."/>
            <person name="Specht C.A."/>
            <person name="Suh B.B."/>
            <person name="Tenney A."/>
            <person name="Utterback T.R."/>
            <person name="Wickes B.L."/>
            <person name="Wortman J.R."/>
            <person name="Wye N.H."/>
            <person name="Kronstad J.W."/>
            <person name="Lodge J.K."/>
            <person name="Heitman J."/>
            <person name="Davis R.W."/>
            <person name="Fraser C.M."/>
            <person name="Hyman R.W."/>
        </authorList>
    </citation>
    <scope>NUCLEOTIDE SEQUENCE [LARGE SCALE GENOMIC DNA]</scope>
    <source>
        <strain>B-3501A</strain>
    </source>
</reference>
<evidence type="ECO:0000250" key="1"/>
<evidence type="ECO:0000255" key="2"/>
<evidence type="ECO:0000255" key="3">
    <source>
        <dbReference type="PROSITE-ProRule" id="PRU00192"/>
    </source>
</evidence>
<evidence type="ECO:0000255" key="4">
    <source>
        <dbReference type="PROSITE-ProRule" id="PRU00782"/>
    </source>
</evidence>
<evidence type="ECO:0000255" key="5">
    <source>
        <dbReference type="PROSITE-ProRule" id="PRU01093"/>
    </source>
</evidence>
<evidence type="ECO:0000256" key="6">
    <source>
        <dbReference type="SAM" id="MobiDB-lite"/>
    </source>
</evidence>
<evidence type="ECO:0000305" key="7"/>
<feature type="chain" id="PRO_0000410157" description="Myosin-1">
    <location>
        <begin position="1"/>
        <end position="1274"/>
    </location>
</feature>
<feature type="domain" description="Myosin motor" evidence="4">
    <location>
        <begin position="41"/>
        <end position="721"/>
    </location>
</feature>
<feature type="domain" description="IQ 1">
    <location>
        <begin position="725"/>
        <end position="745"/>
    </location>
</feature>
<feature type="domain" description="IQ 2">
    <location>
        <begin position="746"/>
        <end position="771"/>
    </location>
</feature>
<feature type="domain" description="TH1" evidence="5">
    <location>
        <begin position="779"/>
        <end position="969"/>
    </location>
</feature>
<feature type="domain" description="SH3" evidence="3">
    <location>
        <begin position="1067"/>
        <end position="1125"/>
    </location>
</feature>
<feature type="region of interest" description="Disordered" evidence="6">
    <location>
        <begin position="1"/>
        <end position="28"/>
    </location>
</feature>
<feature type="region of interest" description="Actin-binding" evidence="1">
    <location>
        <begin position="410"/>
        <end position="492"/>
    </location>
</feature>
<feature type="region of interest" description="Disordered" evidence="6">
    <location>
        <begin position="951"/>
        <end position="1029"/>
    </location>
</feature>
<feature type="region of interest" description="Disordered" evidence="6">
    <location>
        <begin position="1042"/>
        <end position="1071"/>
    </location>
</feature>
<feature type="region of interest" description="Disordered" evidence="6">
    <location>
        <begin position="1116"/>
        <end position="1248"/>
    </location>
</feature>
<feature type="compositionally biased region" description="Polar residues" evidence="6">
    <location>
        <begin position="957"/>
        <end position="974"/>
    </location>
</feature>
<feature type="compositionally biased region" description="Low complexity" evidence="6">
    <location>
        <begin position="1042"/>
        <end position="1053"/>
    </location>
</feature>
<feature type="compositionally biased region" description="Pro residues" evidence="6">
    <location>
        <begin position="1054"/>
        <end position="1067"/>
    </location>
</feature>
<feature type="compositionally biased region" description="Pro residues" evidence="6">
    <location>
        <begin position="1126"/>
        <end position="1138"/>
    </location>
</feature>
<feature type="compositionally biased region" description="Low complexity" evidence="6">
    <location>
        <begin position="1139"/>
        <end position="1157"/>
    </location>
</feature>
<feature type="compositionally biased region" description="Low complexity" evidence="6">
    <location>
        <begin position="1170"/>
        <end position="1226"/>
    </location>
</feature>
<feature type="binding site" evidence="2">
    <location>
        <begin position="134"/>
        <end position="141"/>
    </location>
    <ligand>
        <name>ATP</name>
        <dbReference type="ChEBI" id="CHEBI:30616"/>
    </ligand>
</feature>
<feature type="modified residue" description="Phosphoserine" evidence="1">
    <location>
        <position position="363"/>
    </location>
</feature>
<keyword id="KW-0009">Actin-binding</keyword>
<keyword id="KW-0067">ATP-binding</keyword>
<keyword id="KW-0963">Cytoplasm</keyword>
<keyword id="KW-0206">Cytoskeleton</keyword>
<keyword id="KW-0378">Hydrolase</keyword>
<keyword id="KW-0505">Motor protein</keyword>
<keyword id="KW-0518">Myosin</keyword>
<keyword id="KW-0547">Nucleotide-binding</keyword>
<keyword id="KW-0597">Phosphoprotein</keyword>
<keyword id="KW-0677">Repeat</keyword>
<keyword id="KW-0728">SH3 domain</keyword>
<accession>P0CP01</accession>
<accession>Q55LY2</accession>
<accession>Q5K8T7</accession>